<accession>G4WJD3</accession>
<reference key="1">
    <citation type="journal article" date="2011" name="Glycobiology">
        <title>Genetic analysis of the O-antigen gene clusters of Yersinia pseudotuberculosis O:6 and O:7.</title>
        <authorList>
            <person name="Cunneen M.M."/>
            <person name="Pacinelli E."/>
            <person name="Song W.C."/>
            <person name="Reeves P.R."/>
        </authorList>
    </citation>
    <scope>NUCLEOTIDE SEQUENCE [GENOMIC DNA]</scope>
    <source>
        <strain>H720/86</strain>
    </source>
</reference>
<reference key="2">
    <citation type="journal article" date="2004" name="Biochemistry">
        <title>Biosynthesis of colitose: expression, purification, and mechanistic characterization of GDP-4-keto-6-deoxy-D-mannose-3-dehydrase (ColD) and GDP-L-colitose synthase (ColC).</title>
        <authorList>
            <person name="Alam J."/>
            <person name="Beyer N."/>
            <person name="Liu H.W."/>
        </authorList>
    </citation>
    <scope>FUNCTION</scope>
    <scope>CATALYTIC ACTIVITY</scope>
    <scope>BIOPHYSICOCHEMICAL PROPERTIES</scope>
    <scope>SUBSTRATE SPECIFICITY</scope>
    <scope>SUBUNIT</scope>
    <scope>PATHWAY</scope>
    <scope>REACTION MECHANISM</scope>
</reference>
<protein>
    <recommendedName>
        <fullName evidence="3">GDP-L-colitose synthase</fullName>
        <ecNumber evidence="2">1.1.1.356</ecNumber>
    </recommendedName>
</protein>
<proteinExistence type="evidence at protein level"/>
<evidence type="ECO:0000255" key="1">
    <source>
        <dbReference type="HAMAP-Rule" id="MF_00956"/>
    </source>
</evidence>
<evidence type="ECO:0000269" key="2">
    <source>
    </source>
</evidence>
<evidence type="ECO:0000303" key="3">
    <source>
    </source>
</evidence>
<evidence type="ECO:0000305" key="4"/>
<evidence type="ECO:0000305" key="5">
    <source>
    </source>
</evidence>
<feature type="chain" id="PRO_0000435689" description="GDP-L-colitose synthase">
    <location>
        <begin position="1"/>
        <end position="308"/>
    </location>
</feature>
<feature type="active site" description="Proton donor/acceptor" evidence="1">
    <location>
        <position position="132"/>
    </location>
</feature>
<feature type="binding site" evidence="1">
    <location>
        <begin position="7"/>
        <end position="13"/>
    </location>
    <ligand>
        <name>NADP(+)</name>
        <dbReference type="ChEBI" id="CHEBI:58349"/>
    </ligand>
</feature>
<feature type="binding site" evidence="1">
    <location>
        <begin position="101"/>
        <end position="104"/>
    </location>
    <ligand>
        <name>NADP(+)</name>
        <dbReference type="ChEBI" id="CHEBI:58349"/>
    </ligand>
</feature>
<feature type="binding site" evidence="1">
    <location>
        <position position="136"/>
    </location>
    <ligand>
        <name>NADP(+)</name>
        <dbReference type="ChEBI" id="CHEBI:58349"/>
    </ligand>
</feature>
<feature type="binding site" evidence="1">
    <location>
        <begin position="160"/>
        <end position="163"/>
    </location>
    <ligand>
        <name>NADP(+)</name>
        <dbReference type="ChEBI" id="CHEBI:58349"/>
    </ligand>
</feature>
<feature type="binding site" evidence="1">
    <location>
        <position position="176"/>
    </location>
    <ligand>
        <name>NADP(+)</name>
        <dbReference type="ChEBI" id="CHEBI:58349"/>
    </ligand>
</feature>
<feature type="binding site" evidence="1">
    <location>
        <position position="184"/>
    </location>
    <ligand>
        <name>substrate</name>
    </ligand>
</feature>
<feature type="binding site" evidence="1">
    <location>
        <position position="199"/>
    </location>
    <ligand>
        <name>substrate</name>
    </ligand>
</feature>
<feature type="binding site" evidence="1">
    <location>
        <position position="206"/>
    </location>
    <ligand>
        <name>substrate</name>
    </ligand>
</feature>
<feature type="site" description="Important for catalytic activity" evidence="1">
    <location>
        <position position="103"/>
    </location>
</feature>
<feature type="site" description="Important for catalytic activity" evidence="1">
    <location>
        <position position="105"/>
    </location>
</feature>
<sequence length="308" mass="34768">MKILLTGAGGMVGKNILAHTKSKDYEFITPSSKELDLLEKKHITTYLKHHKPNFIIHAAGIVGGIHANINNPVKFLVENMQMGINLLTAAKDNNIRKLLNLGSSCMYPKDCDSGLTEDMILTGELESTNEGYALAKITSAKLCEYINREDSEFQYKTAIPCNLYGKYDKFDENNSHMIPAVIKKIVTAIETGKSEVEIWGDGEARREFMYAEDLADFIFYTINNFTKMPQNINVGLGQDYTITEYYKVIAKILGYKGTFVYDKSKPVGMRRKLIDNTLLSEFGWSNKVDLESGISKTCQYFLNEKNND</sequence>
<dbReference type="EC" id="1.1.1.356" evidence="2"/>
<dbReference type="EMBL" id="HQ456392">
    <property type="protein sequence ID" value="AEP25495.1"/>
    <property type="molecule type" value="Genomic_DNA"/>
</dbReference>
<dbReference type="SMR" id="G4WJD3"/>
<dbReference type="KEGG" id="ag:AEP25495"/>
<dbReference type="UniPathway" id="UPA01070"/>
<dbReference type="GO" id="GO:0050577">
    <property type="term" value="F:GDP-L-fucose synthase activity"/>
    <property type="evidence" value="ECO:0007669"/>
    <property type="project" value="UniProtKB-UniRule"/>
</dbReference>
<dbReference type="GO" id="GO:0016853">
    <property type="term" value="F:isomerase activity"/>
    <property type="evidence" value="ECO:0007669"/>
    <property type="project" value="UniProtKB-KW"/>
</dbReference>
<dbReference type="GO" id="GO:0070401">
    <property type="term" value="F:NADP+ binding"/>
    <property type="evidence" value="ECO:0007669"/>
    <property type="project" value="UniProtKB-UniRule"/>
</dbReference>
<dbReference type="GO" id="GO:0016616">
    <property type="term" value="F:oxidoreductase activity, acting on the CH-OH group of donors, NAD or NADP as acceptor"/>
    <property type="evidence" value="ECO:0000314"/>
    <property type="project" value="UniProtKB"/>
</dbReference>
<dbReference type="GO" id="GO:0042351">
    <property type="term" value="P:'de novo' GDP-L-fucose biosynthetic process"/>
    <property type="evidence" value="ECO:0007669"/>
    <property type="project" value="UniProtKB-UniRule"/>
</dbReference>
<dbReference type="CDD" id="cd05239">
    <property type="entry name" value="GDP_FS_SDR_e"/>
    <property type="match status" value="1"/>
</dbReference>
<dbReference type="Gene3D" id="3.40.50.720">
    <property type="entry name" value="NAD(P)-binding Rossmann-like Domain"/>
    <property type="match status" value="1"/>
</dbReference>
<dbReference type="Gene3D" id="3.90.25.10">
    <property type="entry name" value="UDP-galactose 4-epimerase, domain 1"/>
    <property type="match status" value="1"/>
</dbReference>
<dbReference type="HAMAP" id="MF_00956">
    <property type="entry name" value="GDP_fucose_synth"/>
    <property type="match status" value="1"/>
</dbReference>
<dbReference type="InterPro" id="IPR001509">
    <property type="entry name" value="Epimerase_deHydtase"/>
</dbReference>
<dbReference type="InterPro" id="IPR028614">
    <property type="entry name" value="GDP_fucose/colitose_synth"/>
</dbReference>
<dbReference type="InterPro" id="IPR036291">
    <property type="entry name" value="NAD(P)-bd_dom_sf"/>
</dbReference>
<dbReference type="PANTHER" id="PTHR43238">
    <property type="entry name" value="GDP-L-FUCOSE SYNTHASE"/>
    <property type="match status" value="1"/>
</dbReference>
<dbReference type="PANTHER" id="PTHR43238:SF1">
    <property type="entry name" value="GDP-L-FUCOSE SYNTHASE"/>
    <property type="match status" value="1"/>
</dbReference>
<dbReference type="Pfam" id="PF01370">
    <property type="entry name" value="Epimerase"/>
    <property type="match status" value="1"/>
</dbReference>
<dbReference type="SUPFAM" id="SSF51735">
    <property type="entry name" value="NAD(P)-binding Rossmann-fold domains"/>
    <property type="match status" value="1"/>
</dbReference>
<organism>
    <name type="scientific">Yersinia pseudotuberculosis</name>
    <dbReference type="NCBI Taxonomy" id="633"/>
    <lineage>
        <taxon>Bacteria</taxon>
        <taxon>Pseudomonadati</taxon>
        <taxon>Pseudomonadota</taxon>
        <taxon>Gammaproteobacteria</taxon>
        <taxon>Enterobacterales</taxon>
        <taxon>Yersiniaceae</taxon>
        <taxon>Yersinia</taxon>
    </lineage>
</organism>
<gene>
    <name evidence="3" type="primary">colC</name>
    <name type="synonym">colB</name>
    <name type="synonym">fcl</name>
</gene>
<name>COLC_YERPU</name>
<comment type="function">
    <text evidence="2">Involved in the biosynthesis of the L-colitose (3,6-dideoxyl-L-xylo-hexose) present in the O-antigen region of lipopolysaccharides (LPS) where it serves as antigenic determinant and are vital for bacterial defense and survival. Catalyzes the two-step NADP-dependent conversion of GDP-4-keto-3,6-dideoxy-D-mannose to GDP-L-colitose. ColC is a bifunctional enzyme catalyzing the C-5 epimerization of GDP-4-keto-3,6-dideoxy-D-mannose and the subsequent C-4 keto reduction of the resulting L-epimer to give GDP-L-colitose. It can use both NADP(+) and NAD(+) as electron acceptor, with a slight preference for NADP(+).</text>
</comment>
<comment type="catalytic activity">
    <reaction evidence="2">
        <text>GDP-beta-L-colitose + NAD(+) = GDP-4-dehydro-3,6-dideoxy-alpha-D-mannose + NADH + H(+)</text>
        <dbReference type="Rhea" id="RHEA:36567"/>
        <dbReference type="ChEBI" id="CHEBI:15378"/>
        <dbReference type="ChEBI" id="CHEBI:57540"/>
        <dbReference type="ChEBI" id="CHEBI:57945"/>
        <dbReference type="ChEBI" id="CHEBI:73931"/>
        <dbReference type="ChEBI" id="CHEBI:73932"/>
        <dbReference type="EC" id="1.1.1.356"/>
    </reaction>
</comment>
<comment type="catalytic activity">
    <reaction evidence="2">
        <text>GDP-beta-L-colitose + NADP(+) = GDP-4-dehydro-3,6-dideoxy-alpha-D-mannose + NADPH + H(+)</text>
        <dbReference type="Rhea" id="RHEA:36563"/>
        <dbReference type="ChEBI" id="CHEBI:15378"/>
        <dbReference type="ChEBI" id="CHEBI:57783"/>
        <dbReference type="ChEBI" id="CHEBI:58349"/>
        <dbReference type="ChEBI" id="CHEBI:73931"/>
        <dbReference type="ChEBI" id="CHEBI:73932"/>
        <dbReference type="EC" id="1.1.1.356"/>
    </reaction>
</comment>
<comment type="biophysicochemical properties">
    <kinetics>
        <KM evidence="2">75 uM for GDP-4-keto-3,6-dideoxy-D-mannose (with NADP at pH 7.5 and 37 degrees Celsius)</KM>
        <KM evidence="2">139 uM for GDP-4-keto-3,6-dideoxy-D-mannose (with NAD at pH 7.5 and 37 degrees Celsius)</KM>
        <Vmax evidence="2">0.037 umol/min/mg enzyme toward GDP-4-keto-3,6-dideoxy-D-mannose (with NADP at pH 7.5 and 37 degrees Celsius)</Vmax>
        <Vmax evidence="2">0.015 umol/min/mg enzyme toward GDP-4-keto-3,6-dideoxy-D-mannose (with NAD at pH 7.5 and 37 degrees Celsius)</Vmax>
    </kinetics>
</comment>
<comment type="pathway">
    <text evidence="5">Nucleotide-sugar metabolism; GDP-L-colitose biosynthesis.</text>
</comment>
<comment type="subunit">
    <text evidence="2">Homodimer.</text>
</comment>
<comment type="similarity">
    <text evidence="4">Belongs to the NAD(P)-dependent epimerase/dehydratase family. Fucose synthase subfamily.</text>
</comment>
<keyword id="KW-0413">Isomerase</keyword>
<keyword id="KW-0520">NAD</keyword>
<keyword id="KW-0521">NADP</keyword>
<keyword id="KW-0560">Oxidoreductase</keyword>